<gene>
    <name evidence="1" type="primary">sfsA</name>
    <name type="ordered locus">SeHA_C0219</name>
</gene>
<sequence length="234" mass="26160">MLFSPPLQRATLIQRYKRFLADVITPDGTTLTLHCPNTGAMTGCATPGDTVWYSTSENTKRKYPHTWELTETQSGAFICVNTLRANQLTKEAIQENRLPALAGYNILKSEVKYGAERSRIDFMLQADFRPDCYIEVKSVTLAEKENGYFPDAITERGQKHLRELMGVAAAGHRAVVVFAVLHSAITRFSPARHIDIKYAQLLSEAQNKGVEVLAYKAELSAQKMELNEPVPITL</sequence>
<dbReference type="EMBL" id="CP001120">
    <property type="protein sequence ID" value="ACF70333.1"/>
    <property type="molecule type" value="Genomic_DNA"/>
</dbReference>
<dbReference type="RefSeq" id="WP_000899412.1">
    <property type="nucleotide sequence ID" value="NC_011083.1"/>
</dbReference>
<dbReference type="SMR" id="B4TK10"/>
<dbReference type="KEGG" id="seh:SeHA_C0219"/>
<dbReference type="HOGENOM" id="CLU_052299_2_0_6"/>
<dbReference type="Proteomes" id="UP000001866">
    <property type="component" value="Chromosome"/>
</dbReference>
<dbReference type="GO" id="GO:0003677">
    <property type="term" value="F:DNA binding"/>
    <property type="evidence" value="ECO:0007669"/>
    <property type="project" value="UniProtKB-KW"/>
</dbReference>
<dbReference type="CDD" id="cd22359">
    <property type="entry name" value="SfsA-like_bacterial"/>
    <property type="match status" value="1"/>
</dbReference>
<dbReference type="FunFam" id="2.40.50.580:FF:000001">
    <property type="entry name" value="Sugar fermentation stimulation protein A"/>
    <property type="match status" value="1"/>
</dbReference>
<dbReference type="FunFam" id="3.40.1350.60:FF:000001">
    <property type="entry name" value="Sugar fermentation stimulation protein A"/>
    <property type="match status" value="1"/>
</dbReference>
<dbReference type="Gene3D" id="2.40.50.580">
    <property type="match status" value="1"/>
</dbReference>
<dbReference type="Gene3D" id="3.40.1350.60">
    <property type="match status" value="1"/>
</dbReference>
<dbReference type="HAMAP" id="MF_00095">
    <property type="entry name" value="SfsA"/>
    <property type="match status" value="1"/>
</dbReference>
<dbReference type="InterPro" id="IPR005224">
    <property type="entry name" value="SfsA"/>
</dbReference>
<dbReference type="InterPro" id="IPR040452">
    <property type="entry name" value="SfsA_C"/>
</dbReference>
<dbReference type="InterPro" id="IPR041465">
    <property type="entry name" value="SfsA_N"/>
</dbReference>
<dbReference type="NCBIfam" id="TIGR00230">
    <property type="entry name" value="sfsA"/>
    <property type="match status" value="1"/>
</dbReference>
<dbReference type="PANTHER" id="PTHR30545">
    <property type="entry name" value="SUGAR FERMENTATION STIMULATION PROTEIN A"/>
    <property type="match status" value="1"/>
</dbReference>
<dbReference type="PANTHER" id="PTHR30545:SF2">
    <property type="entry name" value="SUGAR FERMENTATION STIMULATION PROTEIN A"/>
    <property type="match status" value="1"/>
</dbReference>
<dbReference type="Pfam" id="PF03749">
    <property type="entry name" value="SfsA"/>
    <property type="match status" value="1"/>
</dbReference>
<dbReference type="Pfam" id="PF17746">
    <property type="entry name" value="SfsA_N"/>
    <property type="match status" value="1"/>
</dbReference>
<comment type="function">
    <text evidence="1">Binds to DNA non-specifically. Could be a regulatory factor involved in maltose metabolism.</text>
</comment>
<comment type="similarity">
    <text evidence="1">Belongs to the SfsA family.</text>
</comment>
<organism>
    <name type="scientific">Salmonella heidelberg (strain SL476)</name>
    <dbReference type="NCBI Taxonomy" id="454169"/>
    <lineage>
        <taxon>Bacteria</taxon>
        <taxon>Pseudomonadati</taxon>
        <taxon>Pseudomonadota</taxon>
        <taxon>Gammaproteobacteria</taxon>
        <taxon>Enterobacterales</taxon>
        <taxon>Enterobacteriaceae</taxon>
        <taxon>Salmonella</taxon>
    </lineage>
</organism>
<keyword id="KW-0238">DNA-binding</keyword>
<protein>
    <recommendedName>
        <fullName evidence="1">Sugar fermentation stimulation protein A</fullName>
    </recommendedName>
</protein>
<evidence type="ECO:0000255" key="1">
    <source>
        <dbReference type="HAMAP-Rule" id="MF_00095"/>
    </source>
</evidence>
<proteinExistence type="inferred from homology"/>
<name>SFSA_SALHS</name>
<feature type="chain" id="PRO_1000093589" description="Sugar fermentation stimulation protein A">
    <location>
        <begin position="1"/>
        <end position="234"/>
    </location>
</feature>
<feature type="DNA-binding region" description="H-T-H motif" evidence="1">
    <location>
        <begin position="201"/>
        <end position="220"/>
    </location>
</feature>
<accession>B4TK10</accession>
<reference key="1">
    <citation type="journal article" date="2011" name="J. Bacteriol.">
        <title>Comparative genomics of 28 Salmonella enterica isolates: evidence for CRISPR-mediated adaptive sublineage evolution.</title>
        <authorList>
            <person name="Fricke W.F."/>
            <person name="Mammel M.K."/>
            <person name="McDermott P.F."/>
            <person name="Tartera C."/>
            <person name="White D.G."/>
            <person name="Leclerc J.E."/>
            <person name="Ravel J."/>
            <person name="Cebula T.A."/>
        </authorList>
    </citation>
    <scope>NUCLEOTIDE SEQUENCE [LARGE SCALE GENOMIC DNA]</scope>
    <source>
        <strain>SL476</strain>
    </source>
</reference>